<name>ERG3_ORYSI</name>
<organism>
    <name type="scientific">Oryza sativa subsp. indica</name>
    <name type="common">Rice</name>
    <dbReference type="NCBI Taxonomy" id="39946"/>
    <lineage>
        <taxon>Eukaryota</taxon>
        <taxon>Viridiplantae</taxon>
        <taxon>Streptophyta</taxon>
        <taxon>Embryophyta</taxon>
        <taxon>Tracheophyta</taxon>
        <taxon>Spermatophyta</taxon>
        <taxon>Magnoliopsida</taxon>
        <taxon>Liliopsida</taxon>
        <taxon>Poales</taxon>
        <taxon>Poaceae</taxon>
        <taxon>BOP clade</taxon>
        <taxon>Oryzoideae</taxon>
        <taxon>Oryzeae</taxon>
        <taxon>Oryzinae</taxon>
        <taxon>Oryza</taxon>
        <taxon>Oryza sativa</taxon>
    </lineage>
</organism>
<keyword id="KW-0106">Calcium</keyword>
<keyword id="KW-0479">Metal-binding</keyword>
<keyword id="KW-1185">Reference proteome</keyword>
<proteinExistence type="evidence at transcript level"/>
<protein>
    <recommendedName>
        <fullName>Elicitor-responsive protein 3</fullName>
    </recommendedName>
    <alternativeName>
        <fullName>16 kDa phloem protein</fullName>
    </alternativeName>
    <alternativeName>
        <fullName>RPP16</fullName>
    </alternativeName>
</protein>
<sequence length="144" mass="15869">MVQGTLEVLLVGAKGLENTDYLCNMDPYAVLKCRSQEQKSSVASGKGSDPEWNETFMFSVTHNATELIIKLMDSDSGTDDDFVGEATISLEAIYTEGSIPPTVYNVVKEEEYRGEIKVGLTFTPEDDRDRGLSEEDIGGWKQSS</sequence>
<dbReference type="EMBL" id="AF090698">
    <property type="protein sequence ID" value="AAC35866.1"/>
    <property type="molecule type" value="mRNA"/>
</dbReference>
<dbReference type="EMBL" id="AL442109">
    <property type="protein sequence ID" value="CAH68390.1"/>
    <property type="molecule type" value="Genomic_DNA"/>
</dbReference>
<dbReference type="EMBL" id="CT827958">
    <property type="protein sequence ID" value="CAJ86400.1"/>
    <property type="molecule type" value="Genomic_DNA"/>
</dbReference>
<dbReference type="EMBL" id="CM000129">
    <property type="protein sequence ID" value="EAY94946.1"/>
    <property type="molecule type" value="Genomic_DNA"/>
</dbReference>
<dbReference type="PIR" id="T50649">
    <property type="entry name" value="T50649"/>
</dbReference>
<dbReference type="SMR" id="Q25AG5"/>
<dbReference type="EnsemblPlants" id="BGIOSGA016813-TA">
    <property type="protein sequence ID" value="BGIOSGA016813-PA"/>
    <property type="gene ID" value="BGIOSGA016813"/>
</dbReference>
<dbReference type="EnsemblPlants" id="OsGoSa_04g0020520.01">
    <property type="protein sequence ID" value="OsGoSa_04g0020520.01"/>
    <property type="gene ID" value="OsGoSa_04g0020520"/>
</dbReference>
<dbReference type="EnsemblPlants" id="OsIR64_04g0020060.01">
    <property type="protein sequence ID" value="OsIR64_04g0020060.01"/>
    <property type="gene ID" value="OsIR64_04g0020060"/>
</dbReference>
<dbReference type="EnsemblPlants" id="OsKYG_04g0020400.01">
    <property type="protein sequence ID" value="OsKYG_04g0020400.01"/>
    <property type="gene ID" value="OsKYG_04g0020400"/>
</dbReference>
<dbReference type="EnsemblPlants" id="OsLaMu_04g0021070.01">
    <property type="protein sequence ID" value="OsLaMu_04g0021070.01"/>
    <property type="gene ID" value="OsLaMu_04g0021070"/>
</dbReference>
<dbReference type="EnsemblPlants" id="OsLima_04g0020570.01">
    <property type="protein sequence ID" value="OsLima_04g0020570.01"/>
    <property type="gene ID" value="OsLima_04g0020570"/>
</dbReference>
<dbReference type="EnsemblPlants" id="OsLiXu_04g0020900.01">
    <property type="protein sequence ID" value="OsLiXu_04g0020900.01"/>
    <property type="gene ID" value="OsLiXu_04g0020900"/>
</dbReference>
<dbReference type="EnsemblPlants" id="OsPr106_04g0021270.01">
    <property type="protein sequence ID" value="OsPr106_04g0021270.01"/>
    <property type="gene ID" value="OsPr106_04g0021270"/>
</dbReference>
<dbReference type="EnsemblPlants" id="OsZS97_04G021430_01">
    <property type="protein sequence ID" value="OsZS97_04G021430_01"/>
    <property type="gene ID" value="OsZS97_04G021430"/>
</dbReference>
<dbReference type="Gramene" id="BGIOSGA016813-TA">
    <property type="protein sequence ID" value="BGIOSGA016813-PA"/>
    <property type="gene ID" value="BGIOSGA016813"/>
</dbReference>
<dbReference type="Gramene" id="OsGoSa_04g0020520.01">
    <property type="protein sequence ID" value="OsGoSa_04g0020520.01"/>
    <property type="gene ID" value="OsGoSa_04g0020520"/>
</dbReference>
<dbReference type="Gramene" id="OsIR64_04g0020060.01">
    <property type="protein sequence ID" value="OsIR64_04g0020060.01"/>
    <property type="gene ID" value="OsIR64_04g0020060"/>
</dbReference>
<dbReference type="Gramene" id="OsKYG_04g0020400.01">
    <property type="protein sequence ID" value="OsKYG_04g0020400.01"/>
    <property type="gene ID" value="OsKYG_04g0020400"/>
</dbReference>
<dbReference type="Gramene" id="OsLaMu_04g0021070.01">
    <property type="protein sequence ID" value="OsLaMu_04g0021070.01"/>
    <property type="gene ID" value="OsLaMu_04g0021070"/>
</dbReference>
<dbReference type="Gramene" id="OsLima_04g0020570.01">
    <property type="protein sequence ID" value="OsLima_04g0020570.01"/>
    <property type="gene ID" value="OsLima_04g0020570"/>
</dbReference>
<dbReference type="Gramene" id="OsLiXu_04g0020900.01">
    <property type="protein sequence ID" value="OsLiXu_04g0020900.01"/>
    <property type="gene ID" value="OsLiXu_04g0020900"/>
</dbReference>
<dbReference type="Gramene" id="OsPr106_04g0021270.01">
    <property type="protein sequence ID" value="OsPr106_04g0021270.01"/>
    <property type="gene ID" value="OsPr106_04g0021270"/>
</dbReference>
<dbReference type="Gramene" id="OsZS97_04G021430_01">
    <property type="protein sequence ID" value="OsZS97_04G021430_01"/>
    <property type="gene ID" value="OsZS97_04G021430"/>
</dbReference>
<dbReference type="HOGENOM" id="CLU_109145_1_1_1"/>
<dbReference type="OMA" id="GWKQSSF"/>
<dbReference type="OrthoDB" id="419768at2759"/>
<dbReference type="Proteomes" id="UP000007015">
    <property type="component" value="Chromosome 4"/>
</dbReference>
<dbReference type="GO" id="GO:0005737">
    <property type="term" value="C:cytoplasm"/>
    <property type="evidence" value="ECO:0007669"/>
    <property type="project" value="EnsemblPlants"/>
</dbReference>
<dbReference type="GO" id="GO:0046872">
    <property type="term" value="F:metal ion binding"/>
    <property type="evidence" value="ECO:0007669"/>
    <property type="project" value="UniProtKB-KW"/>
</dbReference>
<dbReference type="FunFam" id="2.60.40.150:FF:000270">
    <property type="entry name" value="Elicitor-responsive protein 3"/>
    <property type="match status" value="1"/>
</dbReference>
<dbReference type="Gene3D" id="2.60.40.150">
    <property type="entry name" value="C2 domain"/>
    <property type="match status" value="1"/>
</dbReference>
<dbReference type="InterPro" id="IPR000008">
    <property type="entry name" value="C2_dom"/>
</dbReference>
<dbReference type="InterPro" id="IPR035892">
    <property type="entry name" value="C2_domain_sf"/>
</dbReference>
<dbReference type="PANTHER" id="PTHR46502:SF2">
    <property type="entry name" value="16 KDA PHLOEM PROTEIN 2"/>
    <property type="match status" value="1"/>
</dbReference>
<dbReference type="PANTHER" id="PTHR46502">
    <property type="entry name" value="C2 DOMAIN-CONTAINING"/>
    <property type="match status" value="1"/>
</dbReference>
<dbReference type="Pfam" id="PF00168">
    <property type="entry name" value="C2"/>
    <property type="match status" value="1"/>
</dbReference>
<dbReference type="SMART" id="SM00239">
    <property type="entry name" value="C2"/>
    <property type="match status" value="1"/>
</dbReference>
<dbReference type="SUPFAM" id="SSF49562">
    <property type="entry name" value="C2 domain (Calcium/lipid-binding domain, CaLB)"/>
    <property type="match status" value="1"/>
</dbReference>
<dbReference type="PROSITE" id="PS50004">
    <property type="entry name" value="C2"/>
    <property type="match status" value="1"/>
</dbReference>
<accession>Q25AG5</accession>
<accession>A2XVT6</accession>
<accession>O82550</accession>
<accession>Q7F9X0</accession>
<comment type="cofactor">
    <cofactor evidence="1">
        <name>Ca(2+)</name>
        <dbReference type="ChEBI" id="CHEBI:29108"/>
    </cofactor>
</comment>
<comment type="induction">
    <text evidence="3">By fungal elicitor.</text>
</comment>
<evidence type="ECO:0000255" key="1">
    <source>
        <dbReference type="PROSITE-ProRule" id="PRU00041"/>
    </source>
</evidence>
<evidence type="ECO:0000256" key="2">
    <source>
        <dbReference type="SAM" id="MobiDB-lite"/>
    </source>
</evidence>
<evidence type="ECO:0000269" key="3">
    <source ref="1"/>
</evidence>
<reference key="1">
    <citation type="submission" date="1998-09" db="EMBL/GenBank/DDBJ databases">
        <title>Identification and characterization of fungal elicitor responsive rice genes by mRNA differential display.</title>
        <authorList>
            <person name="Kim C.Y."/>
            <person name="Cheon S.Y."/>
            <person name="Cho M.J."/>
        </authorList>
    </citation>
    <scope>NUCLEOTIDE SEQUENCE [MRNA]</scope>
    <scope>INDUCTION</scope>
    <source>
        <strain>cv. Milyang 117</strain>
        <tissue>Callus</tissue>
    </source>
</reference>
<reference key="2">
    <citation type="journal article" date="2002" name="Nature">
        <title>Sequence and analysis of rice chromosome 4.</title>
        <authorList>
            <person name="Feng Q."/>
            <person name="Zhang Y."/>
            <person name="Hao P."/>
            <person name="Wang S."/>
            <person name="Fu G."/>
            <person name="Huang Y."/>
            <person name="Li Y."/>
            <person name="Zhu J."/>
            <person name="Liu Y."/>
            <person name="Hu X."/>
            <person name="Jia P."/>
            <person name="Zhang Y."/>
            <person name="Zhao Q."/>
            <person name="Ying K."/>
            <person name="Yu S."/>
            <person name="Tang Y."/>
            <person name="Weng Q."/>
            <person name="Zhang L."/>
            <person name="Lu Y."/>
            <person name="Mu J."/>
            <person name="Lu Y."/>
            <person name="Zhang L.S."/>
            <person name="Yu Z."/>
            <person name="Fan D."/>
            <person name="Liu X."/>
            <person name="Lu T."/>
            <person name="Li C."/>
            <person name="Wu Y."/>
            <person name="Sun T."/>
            <person name="Lei H."/>
            <person name="Li T."/>
            <person name="Hu H."/>
            <person name="Guan J."/>
            <person name="Wu M."/>
            <person name="Zhang R."/>
            <person name="Zhou B."/>
            <person name="Chen Z."/>
            <person name="Chen L."/>
            <person name="Jin Z."/>
            <person name="Wang R."/>
            <person name="Yin H."/>
            <person name="Cai Z."/>
            <person name="Ren S."/>
            <person name="Lv G."/>
            <person name="Gu W."/>
            <person name="Zhu G."/>
            <person name="Tu Y."/>
            <person name="Jia J."/>
            <person name="Zhang Y."/>
            <person name="Chen J."/>
            <person name="Kang H."/>
            <person name="Chen X."/>
            <person name="Shao C."/>
            <person name="Sun Y."/>
            <person name="Hu Q."/>
            <person name="Zhang X."/>
            <person name="Zhang W."/>
            <person name="Wang L."/>
            <person name="Ding C."/>
            <person name="Sheng H."/>
            <person name="Gu J."/>
            <person name="Chen S."/>
            <person name="Ni L."/>
            <person name="Zhu F."/>
            <person name="Chen W."/>
            <person name="Lan L."/>
            <person name="Lai Y."/>
            <person name="Cheng Z."/>
            <person name="Gu M."/>
            <person name="Jiang J."/>
            <person name="Li J."/>
            <person name="Hong G."/>
            <person name="Xue Y."/>
            <person name="Han B."/>
        </authorList>
    </citation>
    <scope>NUCLEOTIDE SEQUENCE [LARGE SCALE GENOMIC DNA]</scope>
    <source>
        <strain>cv. Guang-Lu-Ai No.4</strain>
    </source>
</reference>
<reference key="3">
    <citation type="journal article" date="2005" name="PLoS Biol.">
        <title>The genomes of Oryza sativa: a history of duplications.</title>
        <authorList>
            <person name="Yu J."/>
            <person name="Wang J."/>
            <person name="Lin W."/>
            <person name="Li S."/>
            <person name="Li H."/>
            <person name="Zhou J."/>
            <person name="Ni P."/>
            <person name="Dong W."/>
            <person name="Hu S."/>
            <person name="Zeng C."/>
            <person name="Zhang J."/>
            <person name="Zhang Y."/>
            <person name="Li R."/>
            <person name="Xu Z."/>
            <person name="Li S."/>
            <person name="Li X."/>
            <person name="Zheng H."/>
            <person name="Cong L."/>
            <person name="Lin L."/>
            <person name="Yin J."/>
            <person name="Geng J."/>
            <person name="Li G."/>
            <person name="Shi J."/>
            <person name="Liu J."/>
            <person name="Lv H."/>
            <person name="Li J."/>
            <person name="Wang J."/>
            <person name="Deng Y."/>
            <person name="Ran L."/>
            <person name="Shi X."/>
            <person name="Wang X."/>
            <person name="Wu Q."/>
            <person name="Li C."/>
            <person name="Ren X."/>
            <person name="Wang J."/>
            <person name="Wang X."/>
            <person name="Li D."/>
            <person name="Liu D."/>
            <person name="Zhang X."/>
            <person name="Ji Z."/>
            <person name="Zhao W."/>
            <person name="Sun Y."/>
            <person name="Zhang Z."/>
            <person name="Bao J."/>
            <person name="Han Y."/>
            <person name="Dong L."/>
            <person name="Ji J."/>
            <person name="Chen P."/>
            <person name="Wu S."/>
            <person name="Liu J."/>
            <person name="Xiao Y."/>
            <person name="Bu D."/>
            <person name="Tan J."/>
            <person name="Yang L."/>
            <person name="Ye C."/>
            <person name="Zhang J."/>
            <person name="Xu J."/>
            <person name="Zhou Y."/>
            <person name="Yu Y."/>
            <person name="Zhang B."/>
            <person name="Zhuang S."/>
            <person name="Wei H."/>
            <person name="Liu B."/>
            <person name="Lei M."/>
            <person name="Yu H."/>
            <person name="Li Y."/>
            <person name="Xu H."/>
            <person name="Wei S."/>
            <person name="He X."/>
            <person name="Fang L."/>
            <person name="Zhang Z."/>
            <person name="Zhang Y."/>
            <person name="Huang X."/>
            <person name="Su Z."/>
            <person name="Tong W."/>
            <person name="Li J."/>
            <person name="Tong Z."/>
            <person name="Li S."/>
            <person name="Ye J."/>
            <person name="Wang L."/>
            <person name="Fang L."/>
            <person name="Lei T."/>
            <person name="Chen C.-S."/>
            <person name="Chen H.-C."/>
            <person name="Xu Z."/>
            <person name="Li H."/>
            <person name="Huang H."/>
            <person name="Zhang F."/>
            <person name="Xu H."/>
            <person name="Li N."/>
            <person name="Zhao C."/>
            <person name="Li S."/>
            <person name="Dong L."/>
            <person name="Huang Y."/>
            <person name="Li L."/>
            <person name="Xi Y."/>
            <person name="Qi Q."/>
            <person name="Li W."/>
            <person name="Zhang B."/>
            <person name="Hu W."/>
            <person name="Zhang Y."/>
            <person name="Tian X."/>
            <person name="Jiao Y."/>
            <person name="Liang X."/>
            <person name="Jin J."/>
            <person name="Gao L."/>
            <person name="Zheng W."/>
            <person name="Hao B."/>
            <person name="Liu S.-M."/>
            <person name="Wang W."/>
            <person name="Yuan L."/>
            <person name="Cao M."/>
            <person name="McDermott J."/>
            <person name="Samudrala R."/>
            <person name="Wang J."/>
            <person name="Wong G.K.-S."/>
            <person name="Yang H."/>
        </authorList>
    </citation>
    <scope>NUCLEOTIDE SEQUENCE [LARGE SCALE GENOMIC DNA]</scope>
    <source>
        <strain>cv. 93-11</strain>
    </source>
</reference>
<feature type="chain" id="PRO_0000300243" description="Elicitor-responsive protein 3">
    <location>
        <begin position="1"/>
        <end position="144"/>
    </location>
</feature>
<feature type="domain" description="C2" evidence="1">
    <location>
        <begin position="1"/>
        <end position="103"/>
    </location>
</feature>
<feature type="region of interest" description="Disordered" evidence="2">
    <location>
        <begin position="123"/>
        <end position="144"/>
    </location>
</feature>
<feature type="binding site" evidence="1">
    <location>
        <position position="20"/>
    </location>
    <ligand>
        <name>Ca(2+)</name>
        <dbReference type="ChEBI" id="CHEBI:29108"/>
        <label>1</label>
    </ligand>
</feature>
<feature type="binding site" evidence="1">
    <location>
        <position position="20"/>
    </location>
    <ligand>
        <name>Ca(2+)</name>
        <dbReference type="ChEBI" id="CHEBI:29108"/>
        <label>2</label>
    </ligand>
</feature>
<feature type="binding site" evidence="1">
    <location>
        <position position="26"/>
    </location>
    <ligand>
        <name>Ca(2+)</name>
        <dbReference type="ChEBI" id="CHEBI:29108"/>
        <label>1</label>
    </ligand>
</feature>
<feature type="binding site" evidence="1">
    <location>
        <position position="73"/>
    </location>
    <ligand>
        <name>Ca(2+)</name>
        <dbReference type="ChEBI" id="CHEBI:29108"/>
        <label>1</label>
    </ligand>
</feature>
<feature type="binding site" evidence="1">
    <location>
        <position position="73"/>
    </location>
    <ligand>
        <name>Ca(2+)</name>
        <dbReference type="ChEBI" id="CHEBI:29108"/>
        <label>2</label>
    </ligand>
</feature>
<feature type="binding site" evidence="1">
    <location>
        <position position="75"/>
    </location>
    <ligand>
        <name>Ca(2+)</name>
        <dbReference type="ChEBI" id="CHEBI:29108"/>
        <label>1</label>
    </ligand>
</feature>
<feature type="binding site" evidence="1">
    <location>
        <position position="75"/>
    </location>
    <ligand>
        <name>Ca(2+)</name>
        <dbReference type="ChEBI" id="CHEBI:29108"/>
        <label>2</label>
    </ligand>
</feature>
<feature type="binding site" evidence="1">
    <location>
        <position position="81"/>
    </location>
    <ligand>
        <name>Ca(2+)</name>
        <dbReference type="ChEBI" id="CHEBI:29108"/>
        <label>2</label>
    </ligand>
</feature>
<gene>
    <name type="primary">ERG3</name>
    <name type="ORF">B1011H02.6</name>
    <name type="ORF">OsI_016179</name>
    <name type="ORF">OSIGBa0125M19.3</name>
</gene>